<name>CIDA_STAA3</name>
<evidence type="ECO:0000255" key="1">
    <source>
        <dbReference type="HAMAP-Rule" id="MF_01143"/>
    </source>
</evidence>
<reference key="1">
    <citation type="journal article" date="2006" name="Lancet">
        <title>Complete genome sequence of USA300, an epidemic clone of community-acquired meticillin-resistant Staphylococcus aureus.</title>
        <authorList>
            <person name="Diep B.A."/>
            <person name="Gill S.R."/>
            <person name="Chang R.F."/>
            <person name="Phan T.H."/>
            <person name="Chen J.H."/>
            <person name="Davidson M.G."/>
            <person name="Lin F."/>
            <person name="Lin J."/>
            <person name="Carleton H.A."/>
            <person name="Mongodin E.F."/>
            <person name="Sensabaugh G.F."/>
            <person name="Perdreau-Remington F."/>
        </authorList>
    </citation>
    <scope>NUCLEOTIDE SEQUENCE [LARGE SCALE GENOMIC DNA]</scope>
    <source>
        <strain>USA300</strain>
    </source>
</reference>
<feature type="chain" id="PRO_1000065451" description="Holin-like protein CidA">
    <location>
        <begin position="1"/>
        <end position="131"/>
    </location>
</feature>
<feature type="transmembrane region" description="Helical" evidence="1">
    <location>
        <begin position="4"/>
        <end position="24"/>
    </location>
</feature>
<feature type="transmembrane region" description="Helical" evidence="1">
    <location>
        <begin position="30"/>
        <end position="50"/>
    </location>
</feature>
<feature type="transmembrane region" description="Helical" evidence="1">
    <location>
        <begin position="65"/>
        <end position="85"/>
    </location>
</feature>
<feature type="transmembrane region" description="Helical" evidence="1">
    <location>
        <begin position="88"/>
        <end position="108"/>
    </location>
</feature>
<sequence length="131" mass="14730">MHKVQLIIKLLLQLGIIIVITYIGTEIQKIFHLPLAGSIVGLFLFYLLLQFKIVPLTWVEDGANFLLKTMVFFFIPSVVGIMDVASEITLNYILFFAVIIIGTCIVALSSGYIAEKMSVKHKHRKGVDAYE</sequence>
<keyword id="KW-1003">Cell membrane</keyword>
<keyword id="KW-0204">Cytolysis</keyword>
<keyword id="KW-0472">Membrane</keyword>
<keyword id="KW-0812">Transmembrane</keyword>
<keyword id="KW-1133">Transmembrane helix</keyword>
<accession>Q2FDW5</accession>
<gene>
    <name evidence="1" type="primary">cidA</name>
    <name type="ordered locus">SAUSA300_2479</name>
</gene>
<organism>
    <name type="scientific">Staphylococcus aureus (strain USA300)</name>
    <dbReference type="NCBI Taxonomy" id="367830"/>
    <lineage>
        <taxon>Bacteria</taxon>
        <taxon>Bacillati</taxon>
        <taxon>Bacillota</taxon>
        <taxon>Bacilli</taxon>
        <taxon>Bacillales</taxon>
        <taxon>Staphylococcaceae</taxon>
        <taxon>Staphylococcus</taxon>
    </lineage>
</organism>
<dbReference type="EMBL" id="CP000255">
    <property type="protein sequence ID" value="ABD21950.1"/>
    <property type="molecule type" value="Genomic_DNA"/>
</dbReference>
<dbReference type="RefSeq" id="WP_000549734.1">
    <property type="nucleotide sequence ID" value="NZ_CP027476.1"/>
</dbReference>
<dbReference type="SMR" id="Q2FDW5"/>
<dbReference type="KEGG" id="saa:SAUSA300_2479"/>
<dbReference type="HOGENOM" id="CLU_113736_2_1_9"/>
<dbReference type="OMA" id="MSVMFIP"/>
<dbReference type="Proteomes" id="UP000001939">
    <property type="component" value="Chromosome"/>
</dbReference>
<dbReference type="GO" id="GO:0005886">
    <property type="term" value="C:plasma membrane"/>
    <property type="evidence" value="ECO:0007669"/>
    <property type="project" value="UniProtKB-SubCell"/>
</dbReference>
<dbReference type="GO" id="GO:0019835">
    <property type="term" value="P:cytolysis"/>
    <property type="evidence" value="ECO:0007669"/>
    <property type="project" value="UniProtKB-UniRule"/>
</dbReference>
<dbReference type="GO" id="GO:0031640">
    <property type="term" value="P:killing of cells of another organism"/>
    <property type="evidence" value="ECO:0007669"/>
    <property type="project" value="UniProtKB-KW"/>
</dbReference>
<dbReference type="GO" id="GO:0012501">
    <property type="term" value="P:programmed cell death"/>
    <property type="evidence" value="ECO:0007669"/>
    <property type="project" value="UniProtKB-UniRule"/>
</dbReference>
<dbReference type="HAMAP" id="MF_01143">
    <property type="entry name" value="CidA"/>
    <property type="match status" value="1"/>
</dbReference>
<dbReference type="InterPro" id="IPR023760">
    <property type="entry name" value="Holin-like_CidA"/>
</dbReference>
<dbReference type="InterPro" id="IPR005538">
    <property type="entry name" value="LrgA/CidA"/>
</dbReference>
<dbReference type="PANTHER" id="PTHR33931:SF2">
    <property type="entry name" value="HOLIN-LIKE PROTEIN CIDA"/>
    <property type="match status" value="1"/>
</dbReference>
<dbReference type="PANTHER" id="PTHR33931">
    <property type="entry name" value="HOLIN-LIKE PROTEIN CIDA-RELATED"/>
    <property type="match status" value="1"/>
</dbReference>
<dbReference type="Pfam" id="PF03788">
    <property type="entry name" value="LrgA"/>
    <property type="match status" value="1"/>
</dbReference>
<comment type="function">
    <text evidence="1">Increases the activity of extracellular murein hydrolases possibly by mediating their export via hole formation. Inhibited by the antiholin-like proteins LrgAB. In an unstressed cell, the LrgAB products probably inhibit the function of the CidAB proteins. When a cell is stressed by the addition of antibiotics or by other factors in the environment, the CidAB proteins possibly oligomerize within the bacterial cell membrane, creating lesions that disrupt the proton motive force, which in turn results in loss of cell viability. These lesions are also hypothesized to regulate the subsequent cell lysis by either allowing the murein hydrolases access to the cell wall substrate and/or regulating their activity by a possible change in the cell wall pH that results from loss of membrane potential.</text>
</comment>
<comment type="subcellular location">
    <subcellularLocation>
        <location evidence="1">Cell membrane</location>
        <topology evidence="1">Multi-pass membrane protein</topology>
    </subcellularLocation>
</comment>
<comment type="similarity">
    <text evidence="1">Belongs to the CidA/LrgA family. CidA subfamily.</text>
</comment>
<proteinExistence type="inferred from homology"/>
<protein>
    <recommendedName>
        <fullName evidence="1">Holin-like protein CidA</fullName>
    </recommendedName>
</protein>